<reference key="1">
    <citation type="journal article" date="1997" name="Nature">
        <title>The complete genome sequence of the hyperthermophilic, sulphate-reducing archaeon Archaeoglobus fulgidus.</title>
        <authorList>
            <person name="Klenk H.-P."/>
            <person name="Clayton R.A."/>
            <person name="Tomb J.-F."/>
            <person name="White O."/>
            <person name="Nelson K.E."/>
            <person name="Ketchum K.A."/>
            <person name="Dodson R.J."/>
            <person name="Gwinn M.L."/>
            <person name="Hickey E.K."/>
            <person name="Peterson J.D."/>
            <person name="Richardson D.L."/>
            <person name="Kerlavage A.R."/>
            <person name="Graham D.E."/>
            <person name="Kyrpides N.C."/>
            <person name="Fleischmann R.D."/>
            <person name="Quackenbush J."/>
            <person name="Lee N.H."/>
            <person name="Sutton G.G."/>
            <person name="Gill S.R."/>
            <person name="Kirkness E.F."/>
            <person name="Dougherty B.A."/>
            <person name="McKenney K."/>
            <person name="Adams M.D."/>
            <person name="Loftus B.J."/>
            <person name="Peterson S.N."/>
            <person name="Reich C.I."/>
            <person name="McNeil L.K."/>
            <person name="Badger J.H."/>
            <person name="Glodek A."/>
            <person name="Zhou L."/>
            <person name="Overbeek R."/>
            <person name="Gocayne J.D."/>
            <person name="Weidman J.F."/>
            <person name="McDonald L.A."/>
            <person name="Utterback T.R."/>
            <person name="Cotton M.D."/>
            <person name="Spriggs T."/>
            <person name="Artiach P."/>
            <person name="Kaine B.P."/>
            <person name="Sykes S.M."/>
            <person name="Sadow P.W."/>
            <person name="D'Andrea K.P."/>
            <person name="Bowman C."/>
            <person name="Fujii C."/>
            <person name="Garland S.A."/>
            <person name="Mason T.M."/>
            <person name="Olsen G.J."/>
            <person name="Fraser C.M."/>
            <person name="Smith H.O."/>
            <person name="Woese C.R."/>
            <person name="Venter J.C."/>
        </authorList>
    </citation>
    <scope>NUCLEOTIDE SEQUENCE [LARGE SCALE GENOMIC DNA]</scope>
    <source>
        <strain>ATCC 49558 / DSM 4304 / JCM 9628 / NBRC 100126 / VC-16</strain>
    </source>
</reference>
<feature type="chain" id="PRO_0000159637" description="UPF0332 protein AF_0298">
    <location>
        <begin position="1"/>
        <end position="125"/>
    </location>
</feature>
<feature type="helix" evidence="2">
    <location>
        <begin position="3"/>
        <end position="23"/>
    </location>
</feature>
<feature type="helix" evidence="2">
    <location>
        <begin position="27"/>
        <end position="48"/>
    </location>
</feature>
<feature type="helix" evidence="2">
    <location>
        <begin position="56"/>
        <end position="65"/>
    </location>
</feature>
<feature type="helix" evidence="2">
    <location>
        <begin position="67"/>
        <end position="70"/>
    </location>
</feature>
<feature type="helix" evidence="2">
    <location>
        <begin position="74"/>
        <end position="92"/>
    </location>
</feature>
<feature type="helix" evidence="2">
    <location>
        <begin position="100"/>
        <end position="120"/>
    </location>
</feature>
<proteinExistence type="evidence at protein level"/>
<comment type="similarity">
    <text evidence="1">Belongs to the UPF0332 family.</text>
</comment>
<evidence type="ECO:0000305" key="1"/>
<evidence type="ECO:0007829" key="2">
    <source>
        <dbReference type="PDB" id="2HSB"/>
    </source>
</evidence>
<organism>
    <name type="scientific">Archaeoglobus fulgidus (strain ATCC 49558 / DSM 4304 / JCM 9628 / NBRC 100126 / VC-16)</name>
    <dbReference type="NCBI Taxonomy" id="224325"/>
    <lineage>
        <taxon>Archaea</taxon>
        <taxon>Methanobacteriati</taxon>
        <taxon>Methanobacteriota</taxon>
        <taxon>Archaeoglobi</taxon>
        <taxon>Archaeoglobales</taxon>
        <taxon>Archaeoglobaceae</taxon>
        <taxon>Archaeoglobus</taxon>
    </lineage>
</organism>
<protein>
    <recommendedName>
        <fullName>UPF0332 protein AF_0298</fullName>
    </recommendedName>
</protein>
<accession>O29944</accession>
<dbReference type="EMBL" id="AE000782">
    <property type="protein sequence ID" value="AAB90931.1"/>
    <property type="molecule type" value="Genomic_DNA"/>
</dbReference>
<dbReference type="PIR" id="B69287">
    <property type="entry name" value="B69287"/>
</dbReference>
<dbReference type="PDB" id="2HSB">
    <property type="method" value="X-ray"/>
    <property type="resolution" value="1.95 A"/>
    <property type="chains" value="A=1-125"/>
</dbReference>
<dbReference type="PDBsum" id="2HSB"/>
<dbReference type="SMR" id="O29944"/>
<dbReference type="STRING" id="224325.AF_0298"/>
<dbReference type="PaxDb" id="224325-AF_0298"/>
<dbReference type="DNASU" id="1483513"/>
<dbReference type="EnsemblBacteria" id="AAB90931">
    <property type="protein sequence ID" value="AAB90931"/>
    <property type="gene ID" value="AF_0298"/>
</dbReference>
<dbReference type="KEGG" id="afu:AF_0298"/>
<dbReference type="eggNOG" id="arCOG02123">
    <property type="taxonomic scope" value="Archaea"/>
</dbReference>
<dbReference type="HOGENOM" id="CLU_151247_1_0_2"/>
<dbReference type="OrthoDB" id="101012at2157"/>
<dbReference type="PhylomeDB" id="O29944"/>
<dbReference type="EvolutionaryTrace" id="O29944"/>
<dbReference type="Proteomes" id="UP000002199">
    <property type="component" value="Chromosome"/>
</dbReference>
<dbReference type="Gene3D" id="1.20.120.330">
    <property type="entry name" value="Nucleotidyltransferases domain 2"/>
    <property type="match status" value="1"/>
</dbReference>
<dbReference type="InterPro" id="IPR007842">
    <property type="entry name" value="HEPN_dom"/>
</dbReference>
<dbReference type="InterPro" id="IPR052226">
    <property type="entry name" value="UPF0332_toxin"/>
</dbReference>
<dbReference type="PANTHER" id="PTHR36565">
    <property type="entry name" value="UPF0332 PROTEIN TM_1000"/>
    <property type="match status" value="1"/>
</dbReference>
<dbReference type="PANTHER" id="PTHR36565:SF1">
    <property type="entry name" value="UPF0332 PROTEIN TM_1000"/>
    <property type="match status" value="1"/>
</dbReference>
<dbReference type="Pfam" id="PF05168">
    <property type="entry name" value="HEPN"/>
    <property type="match status" value="1"/>
</dbReference>
<sequence length="125" mass="14543">MDELELRIRKAEKLVQDAKKEFEMGLYERCCSTAYYAMFHAAKAMLLGYGRDSKTHRGTIYLIWECREELGLSDDDCSKLSRAFDLREESDYGIYKEVSKDLAIKILKDAEIFVQKAKNAVNKNR</sequence>
<gene>
    <name type="ordered locus">AF_0298</name>
</gene>
<name>Y298_ARCFU</name>
<keyword id="KW-0002">3D-structure</keyword>
<keyword id="KW-1185">Reference proteome</keyword>